<accession>Q57MB2</accession>
<sequence>MSLDINQIALHQLIKRDEQNLELVLRDSLLEPTTTVVEMVAELHRVYSAKNKAYGLFNEESELAQALRLQRQGEEDFLAFSRAATGRLRDELAKYPFADGGIVLFCHYRYLAVEYLLVTVLNNLSSMRVNENLDINPTHYLDINHADIVARIDLTEWETNPQSTRYLTFLKGRVGRKVADFFMDFLGASEGLNAKAQNRGLLQAVDDFTAEAQLDKAERQNVRQQVYSYCNEQLQAGEEIELESLSKELSGVSEVSFSEFTAEKGYELEESFPADRSTLRQLTKYAGSGGGLTINFDAMLLGERIFWDPATDTLTIKGTPPNLRDQLQRRTSGGK</sequence>
<feature type="chain" id="PRO_1000045939" description="Nucleoid-associated protein YejK">
    <location>
        <begin position="1"/>
        <end position="335"/>
    </location>
</feature>
<name>NDPA_SALCH</name>
<protein>
    <recommendedName>
        <fullName evidence="1">Nucleoid-associated protein YejK</fullName>
    </recommendedName>
</protein>
<gene>
    <name evidence="1" type="primary">yejK</name>
    <name type="ordered locus">SCH_2243</name>
</gene>
<proteinExistence type="inferred from homology"/>
<evidence type="ECO:0000255" key="1">
    <source>
        <dbReference type="HAMAP-Rule" id="MF_00730"/>
    </source>
</evidence>
<comment type="subcellular location">
    <subcellularLocation>
        <location evidence="1">Cytoplasm</location>
        <location evidence="1">Nucleoid</location>
    </subcellularLocation>
</comment>
<comment type="similarity">
    <text evidence="1">Belongs to the YejK family.</text>
</comment>
<keyword id="KW-0963">Cytoplasm</keyword>
<dbReference type="EMBL" id="AE017220">
    <property type="protein sequence ID" value="AAX66149.1"/>
    <property type="molecule type" value="Genomic_DNA"/>
</dbReference>
<dbReference type="RefSeq" id="WP_000050806.1">
    <property type="nucleotide sequence ID" value="NC_006905.1"/>
</dbReference>
<dbReference type="SMR" id="Q57MB2"/>
<dbReference type="KEGG" id="sec:SCH_2243"/>
<dbReference type="HOGENOM" id="CLU_063050_0_1_6"/>
<dbReference type="Proteomes" id="UP000000538">
    <property type="component" value="Chromosome"/>
</dbReference>
<dbReference type="GO" id="GO:0043590">
    <property type="term" value="C:bacterial nucleoid"/>
    <property type="evidence" value="ECO:0007669"/>
    <property type="project" value="TreeGrafter"/>
</dbReference>
<dbReference type="GO" id="GO:0005737">
    <property type="term" value="C:cytoplasm"/>
    <property type="evidence" value="ECO:0007669"/>
    <property type="project" value="UniProtKB-UniRule"/>
</dbReference>
<dbReference type="GO" id="GO:0003690">
    <property type="term" value="F:double-stranded DNA binding"/>
    <property type="evidence" value="ECO:0007669"/>
    <property type="project" value="TreeGrafter"/>
</dbReference>
<dbReference type="GO" id="GO:0003727">
    <property type="term" value="F:single-stranded RNA binding"/>
    <property type="evidence" value="ECO:0007669"/>
    <property type="project" value="TreeGrafter"/>
</dbReference>
<dbReference type="HAMAP" id="MF_00730">
    <property type="entry name" value="NdpA"/>
    <property type="match status" value="1"/>
</dbReference>
<dbReference type="InterPro" id="IPR007358">
    <property type="entry name" value="Nucleoid_associated_NdpA"/>
</dbReference>
<dbReference type="NCBIfam" id="NF001557">
    <property type="entry name" value="PRK00378.1"/>
    <property type="match status" value="1"/>
</dbReference>
<dbReference type="PANTHER" id="PTHR38772">
    <property type="match status" value="1"/>
</dbReference>
<dbReference type="PANTHER" id="PTHR38772:SF1">
    <property type="entry name" value="NUCLEOID-ASSOCIATED PROTEIN YEJK"/>
    <property type="match status" value="1"/>
</dbReference>
<dbReference type="Pfam" id="PF04245">
    <property type="entry name" value="NA37"/>
    <property type="match status" value="1"/>
</dbReference>
<reference key="1">
    <citation type="journal article" date="2005" name="Nucleic Acids Res.">
        <title>The genome sequence of Salmonella enterica serovar Choleraesuis, a highly invasive and resistant zoonotic pathogen.</title>
        <authorList>
            <person name="Chiu C.-H."/>
            <person name="Tang P."/>
            <person name="Chu C."/>
            <person name="Hu S."/>
            <person name="Bao Q."/>
            <person name="Yu J."/>
            <person name="Chou Y.-Y."/>
            <person name="Wang H.-S."/>
            <person name="Lee Y.-S."/>
        </authorList>
    </citation>
    <scope>NUCLEOTIDE SEQUENCE [LARGE SCALE GENOMIC DNA]</scope>
    <source>
        <strain>SC-B67</strain>
    </source>
</reference>
<organism>
    <name type="scientific">Salmonella choleraesuis (strain SC-B67)</name>
    <dbReference type="NCBI Taxonomy" id="321314"/>
    <lineage>
        <taxon>Bacteria</taxon>
        <taxon>Pseudomonadati</taxon>
        <taxon>Pseudomonadota</taxon>
        <taxon>Gammaproteobacteria</taxon>
        <taxon>Enterobacterales</taxon>
        <taxon>Enterobacteriaceae</taxon>
        <taxon>Salmonella</taxon>
    </lineage>
</organism>